<sequence>MTHSTQQLSPEGVAEGKRGRLIRELVNRDKTPLIILIMAAVVGVVTGLLGVAFDRGVDWVQQQRLLALANVADYALLVWPLAFIMSALLAMMGYFLVSRFAPEAGGSGIPEIEGAMEEMRPVRWWRVIPVKFIGGLGTLGAGMVLGREGPMVQMGGNSGRMIVDIFRLRSPEARHSLLATGAAAGLSAAFNAPLAGILFVIEEMRSQFRYSLVSIKAVFIGVITSTIVYRYFNGERAIIEVGKLSDAPLNTLWLYLLLGIIFGAVGVIFNALIFRTQDMFVRFHGGDWRKLVLIGGLLGGMCGLLALLHGNAVGGGFALIPIAAAGNFSIGMLLFIFIARVITTLLCFGSGAPGGIFAPMLALGTILGTAFGLSCAHFFPQYGIEAGTFAIAGMGALFAASVRAPLTGIVLVLEMTDNYQLILPMIVTCLGATLIAQFMGGKPLYSAILARTLAKQEQARATVIAQEPAVENTPQIGK</sequence>
<accession>B1JK21</accession>
<proteinExistence type="inferred from homology"/>
<keyword id="KW-0050">Antiport</keyword>
<keyword id="KW-0997">Cell inner membrane</keyword>
<keyword id="KW-1003">Cell membrane</keyword>
<keyword id="KW-0868">Chloride</keyword>
<keyword id="KW-0406">Ion transport</keyword>
<keyword id="KW-0472">Membrane</keyword>
<keyword id="KW-0812">Transmembrane</keyword>
<keyword id="KW-1133">Transmembrane helix</keyword>
<keyword id="KW-0813">Transport</keyword>
<organism>
    <name type="scientific">Yersinia pseudotuberculosis serotype O:3 (strain YPIII)</name>
    <dbReference type="NCBI Taxonomy" id="502800"/>
    <lineage>
        <taxon>Bacteria</taxon>
        <taxon>Pseudomonadati</taxon>
        <taxon>Pseudomonadota</taxon>
        <taxon>Gammaproteobacteria</taxon>
        <taxon>Enterobacterales</taxon>
        <taxon>Yersiniaceae</taxon>
        <taxon>Yersinia</taxon>
    </lineage>
</organism>
<feature type="chain" id="PRO_1000137314" description="H(+)/Cl(-) exchange transporter ClcA">
    <location>
        <begin position="1"/>
        <end position="478"/>
    </location>
</feature>
<feature type="topological domain" description="Cytoplasmic" evidence="1">
    <location>
        <begin position="1"/>
        <end position="32"/>
    </location>
</feature>
<feature type="transmembrane region" description="Helical" evidence="1">
    <location>
        <begin position="33"/>
        <end position="69"/>
    </location>
</feature>
<feature type="topological domain" description="Periplasmic" evidence="1">
    <location>
        <begin position="70"/>
        <end position="76"/>
    </location>
</feature>
<feature type="transmembrane region" description="Helical" evidence="1">
    <location>
        <begin position="77"/>
        <end position="100"/>
    </location>
</feature>
<feature type="intramembrane region" description="Helical" evidence="1">
    <location>
        <begin position="109"/>
        <end position="116"/>
    </location>
</feature>
<feature type="topological domain" description="Cytoplasmic" evidence="1">
    <location>
        <begin position="117"/>
        <end position="123"/>
    </location>
</feature>
<feature type="transmembrane region" description="Helical" evidence="1">
    <location>
        <begin position="124"/>
        <end position="141"/>
    </location>
</feature>
<feature type="transmembrane region" description="Helical" evidence="1">
    <location>
        <begin position="148"/>
        <end position="166"/>
    </location>
</feature>
<feature type="topological domain" description="Cytoplasmic" evidence="1">
    <location>
        <begin position="167"/>
        <end position="176"/>
    </location>
</feature>
<feature type="intramembrane region" description="Helical" evidence="1">
    <location>
        <begin position="177"/>
        <end position="189"/>
    </location>
</feature>
<feature type="intramembrane region" description="Helical" evidence="1">
    <location>
        <begin position="193"/>
        <end position="201"/>
    </location>
</feature>
<feature type="topological domain" description="Cytoplasmic" evidence="1">
    <location>
        <begin position="202"/>
        <end position="214"/>
    </location>
</feature>
<feature type="transmembrane region" description="Helical" evidence="1">
    <location>
        <begin position="215"/>
        <end position="232"/>
    </location>
</feature>
<feature type="topological domain" description="Periplasmic" evidence="1">
    <location>
        <begin position="233"/>
        <end position="252"/>
    </location>
</feature>
<feature type="transmembrane region" description="Helical" evidence="1">
    <location>
        <begin position="253"/>
        <end position="281"/>
    </location>
</feature>
<feature type="topological domain" description="Cytoplasmic" evidence="1">
    <location>
        <begin position="282"/>
        <end position="287"/>
    </location>
</feature>
<feature type="transmembrane region" description="Helical" evidence="1">
    <location>
        <begin position="288"/>
        <end position="309"/>
    </location>
</feature>
<feature type="topological domain" description="Periplasmic" evidence="1">
    <location>
        <begin position="310"/>
        <end position="329"/>
    </location>
</feature>
<feature type="transmembrane region" description="Helical" evidence="1">
    <location>
        <begin position="330"/>
        <end position="349"/>
    </location>
</feature>
<feature type="transmembrane region" description="Helical" evidence="1">
    <location>
        <begin position="355"/>
        <end position="376"/>
    </location>
</feature>
<feature type="topological domain" description="Periplasmic" evidence="1">
    <location>
        <begin position="377"/>
        <end position="386"/>
    </location>
</feature>
<feature type="intramembrane region" description="Helical" evidence="1">
    <location>
        <begin position="387"/>
        <end position="401"/>
    </location>
</feature>
<feature type="intramembrane region" description="Note=Loop between two helices" evidence="1">
    <location>
        <begin position="402"/>
        <end position="404"/>
    </location>
</feature>
<feature type="intramembrane region" description="Helical" evidence="1">
    <location>
        <begin position="405"/>
        <end position="416"/>
    </location>
</feature>
<feature type="intramembrane region" description="Note=Loop between two helices" evidence="1">
    <location>
        <begin position="417"/>
        <end position="421"/>
    </location>
</feature>
<feature type="transmembrane region" description="Helical" evidence="1">
    <location>
        <begin position="422"/>
        <end position="438"/>
    </location>
</feature>
<feature type="topological domain" description="Cytoplasmic" evidence="1">
    <location>
        <begin position="439"/>
        <end position="478"/>
    </location>
</feature>
<feature type="short sequence motif" description="Selectivity filter part_1" evidence="1">
    <location>
        <begin position="106"/>
        <end position="110"/>
    </location>
</feature>
<feature type="short sequence motif" description="Selectivity filter part_2" evidence="1">
    <location>
        <begin position="146"/>
        <end position="150"/>
    </location>
</feature>
<feature type="short sequence motif" description="Selectivity filter part_3" evidence="1">
    <location>
        <begin position="355"/>
        <end position="359"/>
    </location>
</feature>
<feature type="binding site" evidence="1">
    <location>
        <position position="107"/>
    </location>
    <ligand>
        <name>chloride</name>
        <dbReference type="ChEBI" id="CHEBI:17996"/>
    </ligand>
</feature>
<feature type="binding site" evidence="1">
    <location>
        <position position="356"/>
    </location>
    <ligand>
        <name>chloride</name>
        <dbReference type="ChEBI" id="CHEBI:17996"/>
    </ligand>
</feature>
<feature type="binding site" evidence="1">
    <location>
        <position position="357"/>
    </location>
    <ligand>
        <name>chloride</name>
        <dbReference type="ChEBI" id="CHEBI:17996"/>
    </ligand>
</feature>
<feature type="binding site" evidence="1">
    <location>
        <position position="445"/>
    </location>
    <ligand>
        <name>chloride</name>
        <dbReference type="ChEBI" id="CHEBI:17996"/>
    </ligand>
</feature>
<feature type="site" description="Mediates proton transfer from the outer aqueous phase to the interior of the protein; involved in linking H(+) and Cl(-) transport" evidence="1">
    <location>
        <position position="148"/>
    </location>
</feature>
<feature type="site" description="Mediates proton transfer from the protein to the inner aqueous phase" evidence="1">
    <location>
        <position position="203"/>
    </location>
</feature>
<comment type="function">
    <text evidence="1">Proton-coupled chloride transporter. Functions as antiport system and exchanges two chloride ions for 1 proton. Probably acts as an electrical shunt for an outwardly-directed proton pump that is linked to amino acid decarboxylation, as part of the extreme acid resistance (XAR) response.</text>
</comment>
<comment type="catalytic activity">
    <reaction evidence="1">
        <text>2 chloride(in) + H(+)(out) = 2 chloride(out) + H(+)(in)</text>
        <dbReference type="Rhea" id="RHEA:29567"/>
        <dbReference type="ChEBI" id="CHEBI:15378"/>
        <dbReference type="ChEBI" id="CHEBI:17996"/>
    </reaction>
</comment>
<comment type="subunit">
    <text evidence="1">Homodimer.</text>
</comment>
<comment type="subcellular location">
    <subcellularLocation>
        <location evidence="1">Cell inner membrane</location>
        <topology evidence="1">Multi-pass membrane protein</topology>
    </subcellularLocation>
</comment>
<comment type="similarity">
    <text evidence="1">Belongs to the chloride channel (TC 2.A.49) family. ClcA subfamily.</text>
</comment>
<protein>
    <recommendedName>
        <fullName evidence="1">H(+)/Cl(-) exchange transporter ClcA</fullName>
    </recommendedName>
</protein>
<evidence type="ECO:0000255" key="1">
    <source>
        <dbReference type="HAMAP-Rule" id="MF_01128"/>
    </source>
</evidence>
<dbReference type="EMBL" id="CP000950">
    <property type="protein sequence ID" value="ACA69725.1"/>
    <property type="molecule type" value="Genomic_DNA"/>
</dbReference>
<dbReference type="RefSeq" id="WP_002209364.1">
    <property type="nucleotide sequence ID" value="NZ_CP009792.1"/>
</dbReference>
<dbReference type="SMR" id="B1JK21"/>
<dbReference type="GeneID" id="57975321"/>
<dbReference type="KEGG" id="ypy:YPK_3458"/>
<dbReference type="PATRIC" id="fig|502800.11.peg.4199"/>
<dbReference type="GO" id="GO:0005886">
    <property type="term" value="C:plasma membrane"/>
    <property type="evidence" value="ECO:0007669"/>
    <property type="project" value="UniProtKB-SubCell"/>
</dbReference>
<dbReference type="GO" id="GO:0015297">
    <property type="term" value="F:antiporter activity"/>
    <property type="evidence" value="ECO:0007669"/>
    <property type="project" value="UniProtKB-UniRule"/>
</dbReference>
<dbReference type="GO" id="GO:0005247">
    <property type="term" value="F:voltage-gated chloride channel activity"/>
    <property type="evidence" value="ECO:0007669"/>
    <property type="project" value="TreeGrafter"/>
</dbReference>
<dbReference type="CDD" id="cd01031">
    <property type="entry name" value="EriC"/>
    <property type="match status" value="1"/>
</dbReference>
<dbReference type="FunFam" id="1.10.3080.10:FF:000005">
    <property type="entry name" value="H(+)/Cl(-) exchange transporter ClcA"/>
    <property type="match status" value="1"/>
</dbReference>
<dbReference type="Gene3D" id="1.10.3080.10">
    <property type="entry name" value="Clc chloride channel"/>
    <property type="match status" value="1"/>
</dbReference>
<dbReference type="HAMAP" id="MF_01128">
    <property type="entry name" value="CLC_ClcA"/>
    <property type="match status" value="1"/>
</dbReference>
<dbReference type="InterPro" id="IPR023861">
    <property type="entry name" value="Cl-channel_ClcA"/>
</dbReference>
<dbReference type="InterPro" id="IPR014743">
    <property type="entry name" value="Cl-channel_core"/>
</dbReference>
<dbReference type="InterPro" id="IPR001807">
    <property type="entry name" value="ClC"/>
</dbReference>
<dbReference type="NCBIfam" id="NF003640">
    <property type="entry name" value="PRK05277.1"/>
    <property type="match status" value="1"/>
</dbReference>
<dbReference type="PANTHER" id="PTHR45711">
    <property type="entry name" value="CHLORIDE CHANNEL PROTEIN"/>
    <property type="match status" value="1"/>
</dbReference>
<dbReference type="PANTHER" id="PTHR45711:SF6">
    <property type="entry name" value="CHLORIDE CHANNEL PROTEIN"/>
    <property type="match status" value="1"/>
</dbReference>
<dbReference type="Pfam" id="PF00654">
    <property type="entry name" value="Voltage_CLC"/>
    <property type="match status" value="1"/>
</dbReference>
<dbReference type="PRINTS" id="PR00762">
    <property type="entry name" value="CLCHANNEL"/>
</dbReference>
<dbReference type="SUPFAM" id="SSF81340">
    <property type="entry name" value="Clc chloride channel"/>
    <property type="match status" value="1"/>
</dbReference>
<gene>
    <name evidence="1" type="primary">clcA</name>
    <name evidence="1" type="synonym">eriC</name>
    <name type="ordered locus">YPK_3458</name>
</gene>
<name>CLCA_YERPY</name>
<reference key="1">
    <citation type="submission" date="2008-02" db="EMBL/GenBank/DDBJ databases">
        <title>Complete sequence of Yersinia pseudotuberculosis YPIII.</title>
        <authorList>
            <consortium name="US DOE Joint Genome Institute"/>
            <person name="Copeland A."/>
            <person name="Lucas S."/>
            <person name="Lapidus A."/>
            <person name="Glavina del Rio T."/>
            <person name="Dalin E."/>
            <person name="Tice H."/>
            <person name="Bruce D."/>
            <person name="Goodwin L."/>
            <person name="Pitluck S."/>
            <person name="Munk A.C."/>
            <person name="Brettin T."/>
            <person name="Detter J.C."/>
            <person name="Han C."/>
            <person name="Tapia R."/>
            <person name="Schmutz J."/>
            <person name="Larimer F."/>
            <person name="Land M."/>
            <person name="Hauser L."/>
            <person name="Challacombe J.F."/>
            <person name="Green L."/>
            <person name="Lindler L.E."/>
            <person name="Nikolich M.P."/>
            <person name="Richardson P."/>
        </authorList>
    </citation>
    <scope>NUCLEOTIDE SEQUENCE [LARGE SCALE GENOMIC DNA]</scope>
    <source>
        <strain>YPIII</strain>
    </source>
</reference>